<proteinExistence type="evidence at transcript level"/>
<evidence type="ECO:0000250" key="1"/>
<evidence type="ECO:0000250" key="2">
    <source>
        <dbReference type="UniProtKB" id="Q99627"/>
    </source>
</evidence>
<evidence type="ECO:0000255" key="3">
    <source>
        <dbReference type="PROSITE-ProRule" id="PRU01185"/>
    </source>
</evidence>
<evidence type="ECO:0000305" key="4"/>
<sequence>MPVAVMAQNPVSFQRLQEQCEEQELEAPGGIANPQVYSQLLALYLLHNDMNNARYLWKRIPPAIKSAHSELGGIWEVGQKIWQRDFPGIYTSISACQWSEAIQPVMEAVRDATRRRAFGLVSQAYTSISADDFAAFVGLSVEEAVKGVIEQGWQADLATRMVMPKKPDSAPLSLIPNEQQLARLTDYVAFLEN</sequence>
<comment type="function">
    <text evidence="1">Component of the COP9 signalosome complex (CSN), a complex involved in various cellular and developmental processes. The CSN complex is an essential regulator of the ubiquitin (Ubl) conjugation pathway by mediating the deneddylation of the cullin subunits of E3 ligase complexes, leading to modify the Ubl ligase activity (By similarity).</text>
</comment>
<comment type="subunit">
    <text evidence="2">Component of the CSN complex, probably composed of cops1, cops2, cops3, cops4, cops5, cops6, cops7, cops8 and cops9.</text>
</comment>
<comment type="subcellular location">
    <subcellularLocation>
        <location evidence="1">Cytoplasm</location>
    </subcellularLocation>
    <subcellularLocation>
        <location evidence="1">Nucleus</location>
    </subcellularLocation>
</comment>
<comment type="similarity">
    <text evidence="4">Belongs to the CSN8 family.</text>
</comment>
<organism>
    <name type="scientific">Xenopus tropicalis</name>
    <name type="common">Western clawed frog</name>
    <name type="synonym">Silurana tropicalis</name>
    <dbReference type="NCBI Taxonomy" id="8364"/>
    <lineage>
        <taxon>Eukaryota</taxon>
        <taxon>Metazoa</taxon>
        <taxon>Chordata</taxon>
        <taxon>Craniata</taxon>
        <taxon>Vertebrata</taxon>
        <taxon>Euteleostomi</taxon>
        <taxon>Amphibia</taxon>
        <taxon>Batrachia</taxon>
        <taxon>Anura</taxon>
        <taxon>Pipoidea</taxon>
        <taxon>Pipidae</taxon>
        <taxon>Xenopodinae</taxon>
        <taxon>Xenopus</taxon>
        <taxon>Silurana</taxon>
    </lineage>
</organism>
<keyword id="KW-0963">Cytoplasm</keyword>
<keyword id="KW-0539">Nucleus</keyword>
<keyword id="KW-1185">Reference proteome</keyword>
<keyword id="KW-0736">Signalosome</keyword>
<gene>
    <name type="primary">csn8</name>
    <name type="ORF">TGas005p10.1</name>
</gene>
<protein>
    <recommendedName>
        <fullName>COP9 signalosome complex subunit 8</fullName>
        <shortName>Signalosome subunit 8</shortName>
    </recommendedName>
</protein>
<name>CSN8_XENTR</name>
<accession>Q6P637</accession>
<accession>Q28F35</accession>
<feature type="chain" id="PRO_0000121013" description="COP9 signalosome complex subunit 8">
    <location>
        <begin position="1"/>
        <end position="193"/>
    </location>
</feature>
<feature type="domain" description="PCI" evidence="3">
    <location>
        <begin position="8"/>
        <end position="181"/>
    </location>
</feature>
<reference key="1">
    <citation type="submission" date="2006-03" db="EMBL/GenBank/DDBJ databases">
        <authorList>
            <consortium name="Sanger Xenopus tropicalis EST/cDNA project"/>
        </authorList>
    </citation>
    <scope>NUCLEOTIDE SEQUENCE [LARGE SCALE MRNA]</scope>
    <source>
        <tissue>Gastrula</tissue>
    </source>
</reference>
<reference key="2">
    <citation type="submission" date="2003-11" db="EMBL/GenBank/DDBJ databases">
        <authorList>
            <consortium name="NIH - Xenopus Gene Collection (XGC) project"/>
        </authorList>
    </citation>
    <scope>NUCLEOTIDE SEQUENCE [LARGE SCALE MRNA]</scope>
    <source>
        <tissue>Embryo</tissue>
    </source>
</reference>
<dbReference type="EMBL" id="CR762193">
    <property type="protein sequence ID" value="CAJ81631.1"/>
    <property type="molecule type" value="mRNA"/>
</dbReference>
<dbReference type="EMBL" id="BC062497">
    <property type="protein sequence ID" value="AAH62497.1"/>
    <property type="molecule type" value="mRNA"/>
</dbReference>
<dbReference type="SMR" id="Q6P637"/>
<dbReference type="FunCoup" id="Q6P637">
    <property type="interactions" value="4005"/>
</dbReference>
<dbReference type="STRING" id="8364.ENSXETP00000052871"/>
<dbReference type="PaxDb" id="8364-ENSXETP00000054221"/>
<dbReference type="DNASU" id="394711"/>
<dbReference type="GeneID" id="394711"/>
<dbReference type="KEGG" id="xtr:394711"/>
<dbReference type="AGR" id="Xenbase:XB-GENE-5956805"/>
<dbReference type="CTD" id="10920"/>
<dbReference type="Xenbase" id="XB-GENE-5956805">
    <property type="gene designation" value="cops8"/>
</dbReference>
<dbReference type="eggNOG" id="KOG4414">
    <property type="taxonomic scope" value="Eukaryota"/>
</dbReference>
<dbReference type="HOGENOM" id="CLU_098091_1_1_1"/>
<dbReference type="InParanoid" id="Q6P637"/>
<dbReference type="OMA" id="MRIPDKL"/>
<dbReference type="OrthoDB" id="5351233at2759"/>
<dbReference type="Reactome" id="R-XTR-5696394">
    <property type="pathway name" value="DNA Damage Recognition in GG-NER"/>
</dbReference>
<dbReference type="Reactome" id="R-XTR-6781823">
    <property type="pathway name" value="Formation of TC-NER Pre-Incision Complex"/>
</dbReference>
<dbReference type="Reactome" id="R-XTR-8951664">
    <property type="pathway name" value="Neddylation"/>
</dbReference>
<dbReference type="Proteomes" id="UP000008143">
    <property type="component" value="Chromosome 9"/>
</dbReference>
<dbReference type="GO" id="GO:0008180">
    <property type="term" value="C:COP9 signalosome"/>
    <property type="evidence" value="ECO:0007669"/>
    <property type="project" value="UniProtKB-KW"/>
</dbReference>
<dbReference type="GO" id="GO:0005737">
    <property type="term" value="C:cytoplasm"/>
    <property type="evidence" value="ECO:0007669"/>
    <property type="project" value="UniProtKB-SubCell"/>
</dbReference>
<dbReference type="GO" id="GO:0010387">
    <property type="term" value="P:COP9 signalosome assembly"/>
    <property type="evidence" value="ECO:0007669"/>
    <property type="project" value="InterPro"/>
</dbReference>
<dbReference type="GO" id="GO:0000338">
    <property type="term" value="P:protein deneddylation"/>
    <property type="evidence" value="ECO:0007669"/>
    <property type="project" value="InterPro"/>
</dbReference>
<dbReference type="FunFam" id="1.25.40.990:FF:000011">
    <property type="entry name" value="COP9 signalosome complex subunit 8-like Protein"/>
    <property type="match status" value="1"/>
</dbReference>
<dbReference type="Gene3D" id="1.25.40.990">
    <property type="match status" value="1"/>
</dbReference>
<dbReference type="InterPro" id="IPR033205">
    <property type="entry name" value="COP9_CSN8"/>
</dbReference>
<dbReference type="InterPro" id="IPR033464">
    <property type="entry name" value="CSN8_PSD8_EIF3K"/>
</dbReference>
<dbReference type="InterPro" id="IPR000717">
    <property type="entry name" value="PCI_dom"/>
</dbReference>
<dbReference type="PANTHER" id="PTHR13339">
    <property type="entry name" value="COP9 SIGNALOSOME COMPLEX SUBUNIT 8"/>
    <property type="match status" value="1"/>
</dbReference>
<dbReference type="PANTHER" id="PTHR13339:SF0">
    <property type="entry name" value="COP9 SIGNALOSOME COMPLEX SUBUNIT 8"/>
    <property type="match status" value="1"/>
</dbReference>
<dbReference type="Pfam" id="PF10075">
    <property type="entry name" value="CSN8_PSD8_EIF3K"/>
    <property type="match status" value="1"/>
</dbReference>
<dbReference type="PROSITE" id="PS50250">
    <property type="entry name" value="PCI"/>
    <property type="match status" value="1"/>
</dbReference>